<reference key="1">
    <citation type="journal article" date="2001" name="Immunogenetics">
        <title>Analysis of a 1-Mb BAC contig overlapping the mouse Nkrp1 cluster of genes: cloning of three new Nkrp1 members, Nkrp1d, Nkrp1e, and Nkrp1f.</title>
        <authorList>
            <person name="Plougastel B."/>
            <person name="Matsumoto K."/>
            <person name="Dubbelde C."/>
            <person name="Yokoyama W.M."/>
        </authorList>
    </citation>
    <scope>NUCLEOTIDE SEQUENCE [GENOMIC DNA / MRNA]</scope>
    <scope>DOMAIN ITIM MOTIF</scope>
    <source>
        <strain>C57BL/6J</strain>
    </source>
</reference>
<reference key="2">
    <citation type="submission" date="2001-01" db="EMBL/GenBank/DDBJ databases">
        <authorList>
            <person name="Carlyle J.R."/>
        </authorList>
    </citation>
    <scope>NUCLEOTIDE SEQUENCE [MRNA]</scope>
    <source>
        <strain>C57BL/6NCr</strain>
    </source>
</reference>
<reference key="3">
    <citation type="submission" date="2001-01" db="EMBL/GenBank/DDBJ databases">
        <authorList>
            <person name="Ryan J.C."/>
            <person name="Kumar V."/>
            <person name="Bennett M."/>
            <person name="Sivakumar P.V."/>
            <person name="Niemi E.C."/>
            <person name="Hayashi S."/>
            <person name="Nakamura M.C."/>
        </authorList>
    </citation>
    <scope>NUCLEOTIDE SEQUENCE [MRNA]</scope>
    <source>
        <strain>C57BL/6J</strain>
    </source>
</reference>
<reference key="4">
    <citation type="submission" date="2001-02" db="EMBL/GenBank/DDBJ databases">
        <authorList>
            <person name="Kung S.K.P."/>
            <person name="Su R.-C."/>
            <person name="Shannon J."/>
            <person name="Miller R.G."/>
        </authorList>
    </citation>
    <scope>NUCLEOTIDE SEQUENCE [MRNA]</scope>
    <source>
        <strain>C57BL/6J</strain>
    </source>
</reference>
<reference key="5">
    <citation type="journal article" date="2005" name="Science">
        <title>The transcriptional landscape of the mammalian genome.</title>
        <authorList>
            <person name="Carninci P."/>
            <person name="Kasukawa T."/>
            <person name="Katayama S."/>
            <person name="Gough J."/>
            <person name="Frith M.C."/>
            <person name="Maeda N."/>
            <person name="Oyama R."/>
            <person name="Ravasi T."/>
            <person name="Lenhard B."/>
            <person name="Wells C."/>
            <person name="Kodzius R."/>
            <person name="Shimokawa K."/>
            <person name="Bajic V.B."/>
            <person name="Brenner S.E."/>
            <person name="Batalov S."/>
            <person name="Forrest A.R."/>
            <person name="Zavolan M."/>
            <person name="Davis M.J."/>
            <person name="Wilming L.G."/>
            <person name="Aidinis V."/>
            <person name="Allen J.E."/>
            <person name="Ambesi-Impiombato A."/>
            <person name="Apweiler R."/>
            <person name="Aturaliya R.N."/>
            <person name="Bailey T.L."/>
            <person name="Bansal M."/>
            <person name="Baxter L."/>
            <person name="Beisel K.W."/>
            <person name="Bersano T."/>
            <person name="Bono H."/>
            <person name="Chalk A.M."/>
            <person name="Chiu K.P."/>
            <person name="Choudhary V."/>
            <person name="Christoffels A."/>
            <person name="Clutterbuck D.R."/>
            <person name="Crowe M.L."/>
            <person name="Dalla E."/>
            <person name="Dalrymple B.P."/>
            <person name="de Bono B."/>
            <person name="Della Gatta G."/>
            <person name="di Bernardo D."/>
            <person name="Down T."/>
            <person name="Engstrom P."/>
            <person name="Fagiolini M."/>
            <person name="Faulkner G."/>
            <person name="Fletcher C.F."/>
            <person name="Fukushima T."/>
            <person name="Furuno M."/>
            <person name="Futaki S."/>
            <person name="Gariboldi M."/>
            <person name="Georgii-Hemming P."/>
            <person name="Gingeras T.R."/>
            <person name="Gojobori T."/>
            <person name="Green R.E."/>
            <person name="Gustincich S."/>
            <person name="Harbers M."/>
            <person name="Hayashi Y."/>
            <person name="Hensch T.K."/>
            <person name="Hirokawa N."/>
            <person name="Hill D."/>
            <person name="Huminiecki L."/>
            <person name="Iacono M."/>
            <person name="Ikeo K."/>
            <person name="Iwama A."/>
            <person name="Ishikawa T."/>
            <person name="Jakt M."/>
            <person name="Kanapin A."/>
            <person name="Katoh M."/>
            <person name="Kawasawa Y."/>
            <person name="Kelso J."/>
            <person name="Kitamura H."/>
            <person name="Kitano H."/>
            <person name="Kollias G."/>
            <person name="Krishnan S.P."/>
            <person name="Kruger A."/>
            <person name="Kummerfeld S.K."/>
            <person name="Kurochkin I.V."/>
            <person name="Lareau L.F."/>
            <person name="Lazarevic D."/>
            <person name="Lipovich L."/>
            <person name="Liu J."/>
            <person name="Liuni S."/>
            <person name="McWilliam S."/>
            <person name="Madan Babu M."/>
            <person name="Madera M."/>
            <person name="Marchionni L."/>
            <person name="Matsuda H."/>
            <person name="Matsuzawa S."/>
            <person name="Miki H."/>
            <person name="Mignone F."/>
            <person name="Miyake S."/>
            <person name="Morris K."/>
            <person name="Mottagui-Tabar S."/>
            <person name="Mulder N."/>
            <person name="Nakano N."/>
            <person name="Nakauchi H."/>
            <person name="Ng P."/>
            <person name="Nilsson R."/>
            <person name="Nishiguchi S."/>
            <person name="Nishikawa S."/>
            <person name="Nori F."/>
            <person name="Ohara O."/>
            <person name="Okazaki Y."/>
            <person name="Orlando V."/>
            <person name="Pang K.C."/>
            <person name="Pavan W.J."/>
            <person name="Pavesi G."/>
            <person name="Pesole G."/>
            <person name="Petrovsky N."/>
            <person name="Piazza S."/>
            <person name="Reed J."/>
            <person name="Reid J.F."/>
            <person name="Ring B.Z."/>
            <person name="Ringwald M."/>
            <person name="Rost B."/>
            <person name="Ruan Y."/>
            <person name="Salzberg S.L."/>
            <person name="Sandelin A."/>
            <person name="Schneider C."/>
            <person name="Schoenbach C."/>
            <person name="Sekiguchi K."/>
            <person name="Semple C.A."/>
            <person name="Seno S."/>
            <person name="Sessa L."/>
            <person name="Sheng Y."/>
            <person name="Shibata Y."/>
            <person name="Shimada H."/>
            <person name="Shimada K."/>
            <person name="Silva D."/>
            <person name="Sinclair B."/>
            <person name="Sperling S."/>
            <person name="Stupka E."/>
            <person name="Sugiura K."/>
            <person name="Sultana R."/>
            <person name="Takenaka Y."/>
            <person name="Taki K."/>
            <person name="Tammoja K."/>
            <person name="Tan S.L."/>
            <person name="Tang S."/>
            <person name="Taylor M.S."/>
            <person name="Tegner J."/>
            <person name="Teichmann S.A."/>
            <person name="Ueda H.R."/>
            <person name="van Nimwegen E."/>
            <person name="Verardo R."/>
            <person name="Wei C.L."/>
            <person name="Yagi K."/>
            <person name="Yamanishi H."/>
            <person name="Zabarovsky E."/>
            <person name="Zhu S."/>
            <person name="Zimmer A."/>
            <person name="Hide W."/>
            <person name="Bult C."/>
            <person name="Grimmond S.M."/>
            <person name="Teasdale R.D."/>
            <person name="Liu E.T."/>
            <person name="Brusic V."/>
            <person name="Quackenbush J."/>
            <person name="Wahlestedt C."/>
            <person name="Mattick J.S."/>
            <person name="Hume D.A."/>
            <person name="Kai C."/>
            <person name="Sasaki D."/>
            <person name="Tomaru Y."/>
            <person name="Fukuda S."/>
            <person name="Kanamori-Katayama M."/>
            <person name="Suzuki M."/>
            <person name="Aoki J."/>
            <person name="Arakawa T."/>
            <person name="Iida J."/>
            <person name="Imamura K."/>
            <person name="Itoh M."/>
            <person name="Kato T."/>
            <person name="Kawaji H."/>
            <person name="Kawagashira N."/>
            <person name="Kawashima T."/>
            <person name="Kojima M."/>
            <person name="Kondo S."/>
            <person name="Konno H."/>
            <person name="Nakano K."/>
            <person name="Ninomiya N."/>
            <person name="Nishio T."/>
            <person name="Okada M."/>
            <person name="Plessy C."/>
            <person name="Shibata K."/>
            <person name="Shiraki T."/>
            <person name="Suzuki S."/>
            <person name="Tagami M."/>
            <person name="Waki K."/>
            <person name="Watahiki A."/>
            <person name="Okamura-Oho Y."/>
            <person name="Suzuki H."/>
            <person name="Kawai J."/>
            <person name="Hayashizaki Y."/>
        </authorList>
    </citation>
    <scope>NUCLEOTIDE SEQUENCE [LARGE SCALE MRNA]</scope>
    <source>
        <strain>C57BL/6J</strain>
        <strain>NOD</strain>
        <tissue>Aorta</tissue>
        <tissue>Head</tissue>
        <tissue>Vein</tissue>
    </source>
</reference>
<reference key="6">
    <citation type="journal article" date="2004" name="Genome Res.">
        <title>The status, quality, and expansion of the NIH full-length cDNA project: the Mammalian Gene Collection (MGC).</title>
        <authorList>
            <consortium name="The MGC Project Team"/>
        </authorList>
    </citation>
    <scope>NUCLEOTIDE SEQUENCE [LARGE SCALE MRNA]</scope>
    <source>
        <strain>C57BL/6NCr</strain>
        <tissue>Hematopoietic stem cell</tissue>
    </source>
</reference>
<reference key="7">
    <citation type="journal article" date="1996" name="Nat. Immunol.">
        <title>NKR-P1dim/TCR alpha beta + T cells and natural killer cells share expression of NKR-P1A and NKR-P1D.</title>
        <authorList>
            <person name="Appasamy P.M."/>
            <person name="Kenniston T.W."/>
            <person name="Brissette-Storkus C.S."/>
            <person name="Chambers W.H."/>
        </authorList>
    </citation>
    <scope>TISSUE SPECIFICITY</scope>
</reference>
<reference key="8">
    <citation type="journal article" date="2003" name="Nat. Immunol.">
        <title>Genetically linked C-type lectin-related ligands for the NKRP1 family of natural killer cell receptors.</title>
        <authorList>
            <person name="Iizuka K."/>
            <person name="Naidenko O.V."/>
            <person name="Plougastel B.F.M."/>
            <person name="Fremont D.H."/>
            <person name="Yokoyama W.M."/>
        </authorList>
    </citation>
    <scope>FUNCTION</scope>
    <scope>SUBUNIT</scope>
</reference>
<reference key="9">
    <citation type="journal article" date="2004" name="Proc. Natl. Acad. Sci. U.S.A.">
        <title>Missing self-recognition of Ocil/Clr-b by inhibitory NKR-P1 natural killer cell receptors.</title>
        <authorList>
            <person name="Carlyle J.R."/>
            <person name="Jamieson A.M."/>
            <person name="Gasser S."/>
            <person name="Clingan C.S."/>
            <person name="Arase H."/>
            <person name="Raulet D.H."/>
        </authorList>
    </citation>
    <scope>FUNCTION</scope>
    <scope>INTERACTION WITH CLEC2D</scope>
</reference>
<reference key="10">
    <citation type="journal article" date="2006" name="J. Immunol.">
        <title>Molecular and genetic basis for strain-dependent NK1.1 alloreactivity of mouse NK cells.</title>
        <authorList>
            <person name="Carlyle J.R."/>
            <person name="Mesci A."/>
            <person name="Ljutic B."/>
            <person name="Belanger S."/>
            <person name="Tai L.-H."/>
            <person name="Rousselle E."/>
            <person name="Troke A.D."/>
            <person name="Proteau M.-F."/>
            <person name="Makrigiannis A.P."/>
        </authorList>
    </citation>
    <scope>ANTI-NK1.1 MONOCLONAL ANTIBODY</scope>
    <scope>POLYMORPHISM</scope>
    <source>
        <strain>BALB/cJ</strain>
        <tissue>Spleen</tissue>
    </source>
</reference>
<evidence type="ECO:0000255" key="1"/>
<evidence type="ECO:0000255" key="2">
    <source>
        <dbReference type="PROSITE-ProRule" id="PRU00040"/>
    </source>
</evidence>
<evidence type="ECO:0000269" key="3">
    <source>
    </source>
</evidence>
<evidence type="ECO:0000269" key="4">
    <source>
    </source>
</evidence>
<evidence type="ECO:0000269" key="5">
    <source>
    </source>
</evidence>
<evidence type="ECO:0000269" key="6">
    <source>
    </source>
</evidence>
<evidence type="ECO:0000305" key="7"/>
<evidence type="ECO:0007829" key="8">
    <source>
        <dbReference type="PDB" id="5TZN"/>
    </source>
</evidence>
<organism>
    <name type="scientific">Mus musculus</name>
    <name type="common">Mouse</name>
    <dbReference type="NCBI Taxonomy" id="10090"/>
    <lineage>
        <taxon>Eukaryota</taxon>
        <taxon>Metazoa</taxon>
        <taxon>Chordata</taxon>
        <taxon>Craniata</taxon>
        <taxon>Vertebrata</taxon>
        <taxon>Euteleostomi</taxon>
        <taxon>Mammalia</taxon>
        <taxon>Eutheria</taxon>
        <taxon>Euarchontoglires</taxon>
        <taxon>Glires</taxon>
        <taxon>Rodentia</taxon>
        <taxon>Myomorpha</taxon>
        <taxon>Muroidea</taxon>
        <taxon>Muridae</taxon>
        <taxon>Murinae</taxon>
        <taxon>Mus</taxon>
        <taxon>Mus</taxon>
    </lineage>
</organism>
<gene>
    <name type="primary">Klrb1b</name>
    <name type="synonym">Klrb1d</name>
    <name type="synonym">Ly55d</name>
    <name type="synonym">Nkrp1b</name>
    <name type="synonym">Nkrp1d</name>
</gene>
<protein>
    <recommendedName>
        <fullName>Killer cell lectin-like receptor subfamily B member 1B allele B</fullName>
    </recommendedName>
    <alternativeName>
        <fullName>CD161 antigen-like family member B</fullName>
    </alternativeName>
    <alternativeName>
        <fullName>Inhibitory receptor NKR-P1B</fullName>
    </alternativeName>
    <alternativeName>
        <fullName>Lymphocyte antigen 55d</fullName>
        <shortName>Ly-55d</shortName>
    </alternativeName>
    <alternativeName>
        <fullName>NKR-P1D</fullName>
    </alternativeName>
    <alternativeName>
        <fullName>Natural killer cell surface protein NKR-P1B allele B6</fullName>
    </alternativeName>
    <cdAntigenName>CD161b</cdAntigenName>
</protein>
<feature type="chain" id="PRO_0000271479" description="Killer cell lectin-like receptor subfamily B member 1B allele B">
    <location>
        <begin position="1"/>
        <end position="223"/>
    </location>
</feature>
<feature type="topological domain" description="Cytoplasmic" evidence="1">
    <location>
        <begin position="1"/>
        <end position="43"/>
    </location>
</feature>
<feature type="transmembrane region" description="Helical; Signal-anchor for type II membrane protein" evidence="1">
    <location>
        <begin position="44"/>
        <end position="64"/>
    </location>
</feature>
<feature type="topological domain" description="Extracellular" evidence="1">
    <location>
        <begin position="65"/>
        <end position="223"/>
    </location>
</feature>
<feature type="domain" description="C-type lectin" evidence="2">
    <location>
        <begin position="101"/>
        <end position="211"/>
    </location>
</feature>
<feature type="short sequence motif" description="ITIM motif">
    <location>
        <begin position="6"/>
        <end position="11"/>
    </location>
</feature>
<feature type="short sequence motif" description="LCK-binding motif">
    <location>
        <begin position="32"/>
        <end position="35"/>
    </location>
</feature>
<feature type="disulfide bond" evidence="2">
    <location>
        <begin position="122"/>
        <end position="210"/>
    </location>
</feature>
<feature type="disulfide bond" evidence="2">
    <location>
        <begin position="189"/>
        <end position="202"/>
    </location>
</feature>
<feature type="sequence conflict" description="In Ref. 6; AAH55379." evidence="7" ref="6">
    <original>K</original>
    <variation>E</variation>
    <location>
        <position position="68"/>
    </location>
</feature>
<feature type="sequence conflict" description="In Ref. 6; AAH55379/AAI00581." evidence="7" ref="6">
    <original>V</original>
    <variation>I</variation>
    <location>
        <position position="78"/>
    </location>
</feature>
<feature type="sequence conflict" description="In Ref. 2; AAK08513." evidence="7" ref="2">
    <original>L</original>
    <variation>P</variation>
    <location>
        <position position="131"/>
    </location>
</feature>
<feature type="sequence conflict" description="In Ref. 6; AAI00581." evidence="7" ref="6">
    <original>R</original>
    <variation>G</variation>
    <location>
        <position position="139"/>
    </location>
</feature>
<feature type="sequence conflict" description="In Ref. 2; AAK08513." evidence="7" ref="2">
    <original>K</original>
    <variation>R</variation>
    <location>
        <position position="146"/>
    </location>
</feature>
<feature type="sequence conflict" description="In Ref. 4; AAK39100." evidence="7" ref="4">
    <original>V</original>
    <variation>D</variation>
    <location>
        <position position="183"/>
    </location>
</feature>
<feature type="sequence conflict" description="In Ref. 4; AAK39100." evidence="7" ref="4">
    <original>A</original>
    <variation>S</variation>
    <location>
        <position position="191"/>
    </location>
</feature>
<feature type="sequence conflict" description="In Ref. 5; BAE41390." evidence="7" ref="5">
    <original>A</original>
    <variation>T</variation>
    <location>
        <position position="191"/>
    </location>
</feature>
<feature type="sequence conflict" description="In Ref. 4; AAK39100 and 5; BAE41390." evidence="7" ref="4 5">
    <original>E</original>
    <variation>D</variation>
    <location>
        <position position="195"/>
    </location>
</feature>
<feature type="sequence conflict" description="In Ref. 4; AAK39100 and 5; BAE41390." evidence="7" ref="4 5">
    <original>G</original>
    <variation>S</variation>
    <location>
        <position position="201"/>
    </location>
</feature>
<feature type="sequence conflict" description="In Ref. 4; AAK39100 and 5; BAE41390." evidence="7" ref="4 5">
    <original>S</original>
    <variation>T</variation>
    <location>
        <position position="204"/>
    </location>
</feature>
<feature type="sequence conflict" description="In Ref. 5; BAE41390." evidence="7" ref="5">
    <original>E</original>
    <variation>K</variation>
    <location>
        <position position="217"/>
    </location>
</feature>
<feature type="sequence conflict" description="In Ref. 4; AAK39100 and 5; BAE41390." evidence="7" ref="4 5">
    <original>C</original>
    <variation>S</variation>
    <location>
        <position position="220"/>
    </location>
</feature>
<feature type="sequence conflict" description="In Ref. 6; AAI00581." evidence="7" ref="6">
    <original>S</original>
    <variation>P</variation>
    <location>
        <position position="223"/>
    </location>
</feature>
<feature type="strand" evidence="8">
    <location>
        <begin position="99"/>
        <end position="101"/>
    </location>
</feature>
<feature type="strand" evidence="8">
    <location>
        <begin position="104"/>
        <end position="108"/>
    </location>
</feature>
<feature type="helix" evidence="8">
    <location>
        <begin position="115"/>
        <end position="124"/>
    </location>
</feature>
<feature type="helix" evidence="8">
    <location>
        <begin position="135"/>
        <end position="143"/>
    </location>
</feature>
<feature type="strand" evidence="8">
    <location>
        <begin position="150"/>
        <end position="159"/>
    </location>
</feature>
<feature type="turn" evidence="8">
    <location>
        <begin position="160"/>
        <end position="163"/>
    </location>
</feature>
<feature type="strand" evidence="8">
    <location>
        <begin position="164"/>
        <end position="167"/>
    </location>
</feature>
<feature type="strand" evidence="8">
    <location>
        <begin position="188"/>
        <end position="193"/>
    </location>
</feature>
<feature type="strand" evidence="8">
    <location>
        <begin position="196"/>
        <end position="200"/>
    </location>
</feature>
<feature type="strand" evidence="8">
    <location>
        <begin position="206"/>
        <end position="213"/>
    </location>
</feature>
<sequence length="223" mass="25027">MDSTTLVYADLNLARIQEPKHDSPPSLSPDTCRCPRWHRLALKFGCAGLILLVLVVIGLCVLVLSVQKSSVQKICADVQENRTHTTGCSAKLECPQDWLSHRDKCFHVSQVSNTWKECRIDCDKKGATLLLIQDQEELRFLLDSIKEKYNSFWIGLSYTLTDMNWKWINGTAFNSDVLKITGVTENGSCAAISGEKVTSEGCSSDNRWICQKELNHETPCNDS</sequence>
<dbReference type="EMBL" id="AF324825">
    <property type="protein sequence ID" value="AAL37353.1"/>
    <property type="molecule type" value="Genomic_DNA"/>
</dbReference>
<dbReference type="EMBL" id="AF324826">
    <property type="protein sequence ID" value="AAL37354.1"/>
    <property type="molecule type" value="mRNA"/>
</dbReference>
<dbReference type="EMBL" id="AF338321">
    <property type="protein sequence ID" value="AAK08512.1"/>
    <property type="molecule type" value="mRNA"/>
</dbReference>
<dbReference type="EMBL" id="AF338322">
    <property type="protein sequence ID" value="AAK08513.1"/>
    <property type="molecule type" value="mRNA"/>
</dbReference>
<dbReference type="EMBL" id="AF342896">
    <property type="protein sequence ID" value="AAK26639.1"/>
    <property type="molecule type" value="mRNA"/>
</dbReference>
<dbReference type="EMBL" id="AF354260">
    <property type="protein sequence ID" value="AAK39100.1"/>
    <property type="molecule type" value="mRNA"/>
</dbReference>
<dbReference type="EMBL" id="AK030702">
    <property type="protein sequence ID" value="BAC27088.1"/>
    <property type="molecule type" value="mRNA"/>
</dbReference>
<dbReference type="EMBL" id="AK041228">
    <property type="protein sequence ID" value="BAC30869.2"/>
    <property type="molecule type" value="mRNA"/>
</dbReference>
<dbReference type="EMBL" id="AK169820">
    <property type="protein sequence ID" value="BAE41390.1"/>
    <property type="molecule type" value="mRNA"/>
</dbReference>
<dbReference type="EMBL" id="BC055379">
    <property type="protein sequence ID" value="AAH55379.1"/>
    <property type="molecule type" value="mRNA"/>
</dbReference>
<dbReference type="EMBL" id="BC100580">
    <property type="protein sequence ID" value="AAI00581.1"/>
    <property type="molecule type" value="mRNA"/>
</dbReference>
<dbReference type="CCDS" id="CCDS39655.1"/>
<dbReference type="RefSeq" id="NP_085102.4">
    <property type="nucleotide sequence ID" value="NM_030599.4"/>
</dbReference>
<dbReference type="PDB" id="5TZN">
    <property type="method" value="X-ray"/>
    <property type="resolution" value="2.60 A"/>
    <property type="chains" value="A/W=89-215"/>
</dbReference>
<dbReference type="PDB" id="6E7D">
    <property type="method" value="X-ray"/>
    <property type="resolution" value="2.90 A"/>
    <property type="chains" value="Q/R/S/T/U/V/W/X=89-215"/>
</dbReference>
<dbReference type="PDBsum" id="5TZN"/>
<dbReference type="PDBsum" id="6E7D"/>
<dbReference type="SMR" id="Q99JB4"/>
<dbReference type="STRING" id="10090.ENSMUSP00000032472"/>
<dbReference type="MEROPS" id="I63.002"/>
<dbReference type="PaxDb" id="10090-ENSMUSP00000032472"/>
<dbReference type="ProteomicsDB" id="265026"/>
<dbReference type="DNASU" id="80782"/>
<dbReference type="Ensembl" id="ENSMUST00000032472.11">
    <property type="protein sequence ID" value="ENSMUSP00000032472.5"/>
    <property type="gene ID" value="ENSMUSG00000079298.10"/>
</dbReference>
<dbReference type="GeneID" id="80782"/>
<dbReference type="KEGG" id="mmu:80782"/>
<dbReference type="UCSC" id="uc009ees.2">
    <property type="organism name" value="mouse"/>
</dbReference>
<dbReference type="AGR" id="MGI:107539"/>
<dbReference type="CTD" id="80782"/>
<dbReference type="MGI" id="MGI:107539">
    <property type="gene designation" value="Klrb1b"/>
</dbReference>
<dbReference type="VEuPathDB" id="HostDB:ENSMUSG00000079298"/>
<dbReference type="eggNOG" id="KOG4297">
    <property type="taxonomic scope" value="Eukaryota"/>
</dbReference>
<dbReference type="GeneTree" id="ENSGT00940000154685"/>
<dbReference type="HOGENOM" id="CLU_049894_8_2_1"/>
<dbReference type="OMA" id="TENKWIC"/>
<dbReference type="OrthoDB" id="8950604at2759"/>
<dbReference type="PhylomeDB" id="Q99JB4"/>
<dbReference type="TreeFam" id="TF337735"/>
<dbReference type="BioGRID-ORCS" id="80782">
    <property type="hits" value="0 hits in 76 CRISPR screens"/>
</dbReference>
<dbReference type="ChiTaRS" id="Klrb1b">
    <property type="organism name" value="mouse"/>
</dbReference>
<dbReference type="Proteomes" id="UP000000589">
    <property type="component" value="Chromosome 6"/>
</dbReference>
<dbReference type="Bgee" id="ENSMUSG00000079298">
    <property type="expression patterns" value="Expressed in lumbar dorsal root ganglion and 39 other cell types or tissues"/>
</dbReference>
<dbReference type="ExpressionAtlas" id="Q99JB4">
    <property type="expression patterns" value="baseline and differential"/>
</dbReference>
<dbReference type="GO" id="GO:0009897">
    <property type="term" value="C:external side of plasma membrane"/>
    <property type="evidence" value="ECO:0000314"/>
    <property type="project" value="MGI"/>
</dbReference>
<dbReference type="GO" id="GO:0005886">
    <property type="term" value="C:plasma membrane"/>
    <property type="evidence" value="ECO:0000314"/>
    <property type="project" value="MGI"/>
</dbReference>
<dbReference type="GO" id="GO:0030246">
    <property type="term" value="F:carbohydrate binding"/>
    <property type="evidence" value="ECO:0007669"/>
    <property type="project" value="UniProtKB-KW"/>
</dbReference>
<dbReference type="GO" id="GO:0042802">
    <property type="term" value="F:identical protein binding"/>
    <property type="evidence" value="ECO:0000353"/>
    <property type="project" value="MGI"/>
</dbReference>
<dbReference type="GO" id="GO:0038023">
    <property type="term" value="F:signaling receptor activity"/>
    <property type="evidence" value="ECO:0000314"/>
    <property type="project" value="MGI"/>
</dbReference>
<dbReference type="GO" id="GO:0045953">
    <property type="term" value="P:negative regulation of natural killer cell mediated cytotoxicity"/>
    <property type="evidence" value="ECO:0000314"/>
    <property type="project" value="MGI"/>
</dbReference>
<dbReference type="CDD" id="cd03593">
    <property type="entry name" value="CLECT_NK_receptors_like"/>
    <property type="match status" value="1"/>
</dbReference>
<dbReference type="FunFam" id="3.10.100.10:FF:000077">
    <property type="entry name" value="Killer cell lectin-like receptor subfamily B member 1A"/>
    <property type="match status" value="1"/>
</dbReference>
<dbReference type="Gene3D" id="3.10.100.10">
    <property type="entry name" value="Mannose-Binding Protein A, subunit A"/>
    <property type="match status" value="1"/>
</dbReference>
<dbReference type="InterPro" id="IPR001304">
    <property type="entry name" value="C-type_lectin-like"/>
</dbReference>
<dbReference type="InterPro" id="IPR016186">
    <property type="entry name" value="C-type_lectin-like/link_sf"/>
</dbReference>
<dbReference type="InterPro" id="IPR016187">
    <property type="entry name" value="CTDL_fold"/>
</dbReference>
<dbReference type="InterPro" id="IPR051527">
    <property type="entry name" value="KLR_subfamily_B"/>
</dbReference>
<dbReference type="InterPro" id="IPR033992">
    <property type="entry name" value="NKR-like_CTLD"/>
</dbReference>
<dbReference type="PANTHER" id="PTHR46784">
    <property type="entry name" value="KILLER CELL LECTIN-LIKE RECEPTOR SUBFAMILY B MEMBER 1"/>
    <property type="match status" value="1"/>
</dbReference>
<dbReference type="PANTHER" id="PTHR46784:SF1">
    <property type="entry name" value="KILLER CELL LECTIN-LIKE RECEPTOR SUBFAMILY B MEMBER 1"/>
    <property type="match status" value="1"/>
</dbReference>
<dbReference type="Pfam" id="PF00059">
    <property type="entry name" value="Lectin_C"/>
    <property type="match status" value="1"/>
</dbReference>
<dbReference type="SMART" id="SM00034">
    <property type="entry name" value="CLECT"/>
    <property type="match status" value="1"/>
</dbReference>
<dbReference type="SUPFAM" id="SSF56436">
    <property type="entry name" value="C-type lectin-like"/>
    <property type="match status" value="1"/>
</dbReference>
<dbReference type="PROSITE" id="PS50041">
    <property type="entry name" value="C_TYPE_LECTIN_2"/>
    <property type="match status" value="1"/>
</dbReference>
<comment type="function">
    <text evidence="4 5">Receptor for CLEC2D/OCIL. Ligand-binding contributes to inhibition of cytotoxic natural killer (NK) cells. May mediate MHC class I-independent 'missing-self' recognition of allografts, tumor cells and virus-infected cells.</text>
</comment>
<comment type="subunit">
    <text evidence="4 5">Homodimer; disulfide-linked. Interacts with tyrosine kinase LCK. Binds PTPN6/SHP-1 in a phosphorylation-dependent manner.</text>
</comment>
<comment type="subcellular location">
    <subcellularLocation>
        <location evidence="7">Membrane</location>
        <topology evidence="7">Single-pass type II membrane protein</topology>
    </subcellularLocation>
</comment>
<comment type="tissue specificity">
    <text evidence="6">Expressed in NK cells and a subset of T-cells.</text>
</comment>
<comment type="domain">
    <text evidence="3">Contains 1 copy of a cytoplasmic motif that is referred to as the immunoreceptor tyrosine-based inhibitor motif (ITIM). The phosphorylated ITIM motif can bind the SH2 domain of several SH2-containing phosphatases leading to down-regulation of cell activation.</text>
</comment>
<comment type="polymorphism">
    <text>Variants Thr-191 and Ala-191 interfere with binding of the anti-NK1.1 monoclonal antibody PK136 which identifies NK cells from C57BL/6 and SJL but not BALB/c mice by binding Klrb1b and Klrb1c in an allele-dependent manner. Mutagenesis of Thr-191 to Ser-191 restores NK1.1 reactivity to Klrb1b from BALB/c mice.</text>
</comment>
<name>KRBBB_MOUSE</name>
<keyword id="KW-0002">3D-structure</keyword>
<keyword id="KW-1015">Disulfide bond</keyword>
<keyword id="KW-0430">Lectin</keyword>
<keyword id="KW-0472">Membrane</keyword>
<keyword id="KW-0675">Receptor</keyword>
<keyword id="KW-1185">Reference proteome</keyword>
<keyword id="KW-0735">Signal-anchor</keyword>
<keyword id="KW-0812">Transmembrane</keyword>
<keyword id="KW-1133">Transmembrane helix</keyword>
<proteinExistence type="evidence at protein level"/>
<accession>Q99JB4</accession>
<accession>Q3TE58</accession>
<accession>Q497F5</accession>
<accession>Q7TMP8</accession>
<accession>Q8BRW0</accession>
<accession>Q925G5</accession>
<accession>Q99P32</accession>